<accession>B4YST4</accession>
<evidence type="ECO:0000250" key="1">
    <source>
        <dbReference type="UniProtKB" id="P31572"/>
    </source>
</evidence>
<evidence type="ECO:0000269" key="2">
    <source>
    </source>
</evidence>
<evidence type="ECO:0000303" key="3">
    <source>
    </source>
</evidence>
<evidence type="ECO:0000305" key="4"/>
<evidence type="ECO:0000305" key="5">
    <source>
    </source>
</evidence>
<evidence type="ECO:0000312" key="6">
    <source>
        <dbReference type="EMBL" id="ACF20979.1"/>
    </source>
</evidence>
<name>BAIK_CLOSV</name>
<organism>
    <name type="scientific">Clostridium scindens (strain JCM 10418 / VPI 12708)</name>
    <dbReference type="NCBI Taxonomy" id="29347"/>
    <lineage>
        <taxon>Bacteria</taxon>
        <taxon>Bacillati</taxon>
        <taxon>Bacillota</taxon>
        <taxon>Clostridia</taxon>
        <taxon>Lachnospirales</taxon>
        <taxon>Lachnospiraceae</taxon>
    </lineage>
</organism>
<keyword id="KW-0808">Transferase</keyword>
<gene>
    <name evidence="3 6" type="primary">baiK</name>
</gene>
<sequence>MKGTGLNNFPQFGVMEGVKILVCGGAIAGPFGATLLGEIGAEVVHFESPKNPDSVRGHYGYSQNHRNQLSMVADMKTPEGLEIFKKLIKWTDIFIESSKGGTYEKMGLTDEVLWEINPRLAIVHVSGFGQTGVPEYIDRASYDAVGQAFSGYMSFNGTPKEAMKVSPYLSDYVTALNTCWTALAAYVHVLRTGKGESVDVAQYESLARILDTRPMEYFTDGKEFPRTGNKDTQAALFSFYTCKDGGEIFIGMNGYGPVRRGYPLIGLPKPGDGDPEIDEILSGWMADTDLGRRLEAAMEKFVSEHTVDEVEKIMLENQIPCLKVYTLKDCAKDPHWKARDIFVEWDDPMMGRVKGLGIINKWKNNPGEIKWGAPLFGENNEEVLKDLGYTEEEIEDFAKRGITASFDFDQTYEIYKLEELFPHYREGFTERWKKEEE</sequence>
<proteinExistence type="evidence at protein level"/>
<protein>
    <recommendedName>
        <fullName evidence="5">Bile acid CoA-transferase BaiK</fullName>
        <ecNumber evidence="2">2.8.3.25</ecNumber>
    </recommendedName>
</protein>
<feature type="chain" id="PRO_0000451589" description="Bile acid CoA-transferase BaiK">
    <location>
        <begin position="1"/>
        <end position="437"/>
    </location>
</feature>
<feature type="active site" description="Nucleophile" evidence="1">
    <location>
        <position position="171"/>
    </location>
</feature>
<reference key="1">
    <citation type="submission" date="2008-04" db="EMBL/GenBank/DDBJ databases">
        <title>Identification and characterization of novel genes involved in bile acid metabolism in intestinal Clostridia.</title>
        <authorList>
            <person name="Ridlon J.M."/>
            <person name="Kang D."/>
            <person name="Hylemon P.B."/>
        </authorList>
    </citation>
    <scope>NUCLEOTIDE SEQUENCE [GENOMIC DNA]</scope>
    <source>
        <strain>JCM 10418 /VPI 12708</strain>
    </source>
</reference>
<reference key="2">
    <citation type="journal article" date="2012" name="J. Lipid Res.">
        <title>Identification and characterization of two bile acid coenzyme A transferases from Clostridium scindens, a bile acid 7alpha-dehydroxylating intestinal bacterium.</title>
        <authorList>
            <person name="Ridlon J.M."/>
            <person name="Hylemon P.B."/>
        </authorList>
    </citation>
    <scope>FUNCTION</scope>
    <scope>CATALYTIC ACTIVITY</scope>
    <scope>SUBSTRATE SPECIFICITY</scope>
    <scope>PATHWAY</scope>
    <source>
        <strain>JCM 10418 /VPI 12708</strain>
    </source>
</reference>
<comment type="function">
    <text evidence="2">Functions in the bile acid 7alpha-dehydroxylation pathway, which forms secondary bile acids via the 7alpha-dehydroxylation of primary bile acids, and is carried out by intestinal anaerobic bacteria. Acts as a bile acid CoA transferase with broad bile acid substrate specificity. Catalyzes the transfer of the CoA moiety of secondary bile acid-CoA compounds to primary bile acids. Can use deoxycholoyl-CoA and allodeoxycholoyl-CoA as bile acid CoA donors and cholate, allocholate and ursodeoxycholate as bile acid CoA acceptors. Shows no activity when lithocholoyl-CoA is used as the CoA donor.</text>
</comment>
<comment type="catalytic activity">
    <reaction evidence="2">
        <text>deoxycholoyl-CoA + cholate = choloyl-CoA + deoxycholate</text>
        <dbReference type="Rhea" id="RHEA:49436"/>
        <dbReference type="ChEBI" id="CHEBI:23614"/>
        <dbReference type="ChEBI" id="CHEBI:29747"/>
        <dbReference type="ChEBI" id="CHEBI:57373"/>
        <dbReference type="ChEBI" id="CHEBI:58810"/>
        <dbReference type="EC" id="2.8.3.25"/>
    </reaction>
    <physiologicalReaction direction="left-to-right" evidence="5">
        <dbReference type="Rhea" id="RHEA:49437"/>
    </physiologicalReaction>
</comment>
<comment type="catalytic activity">
    <reaction evidence="2">
        <text>allodeoxycholoyl-CoA + cholate = allodeoxycholate + choloyl-CoA</text>
        <dbReference type="Rhea" id="RHEA:53756"/>
        <dbReference type="ChEBI" id="CHEBI:29747"/>
        <dbReference type="ChEBI" id="CHEBI:57373"/>
        <dbReference type="ChEBI" id="CHEBI:137662"/>
        <dbReference type="ChEBI" id="CHEBI:137664"/>
    </reaction>
    <physiologicalReaction direction="left-to-right" evidence="5">
        <dbReference type="Rhea" id="RHEA:53757"/>
    </physiologicalReaction>
</comment>
<comment type="catalytic activity">
    <reaction evidence="2">
        <text>allocholate + deoxycholoyl-CoA = allocholoyl-CoA + deoxycholate</text>
        <dbReference type="Rhea" id="RHEA:53760"/>
        <dbReference type="ChEBI" id="CHEBI:23614"/>
        <dbReference type="ChEBI" id="CHEBI:58810"/>
        <dbReference type="ChEBI" id="CHEBI:137661"/>
        <dbReference type="ChEBI" id="CHEBI:137663"/>
    </reaction>
    <physiologicalReaction direction="left-to-right" evidence="5">
        <dbReference type="Rhea" id="RHEA:53761"/>
    </physiologicalReaction>
</comment>
<comment type="catalytic activity">
    <reaction evidence="2">
        <text>allocholate + allodeoxycholoyl-CoA = allocholoyl-CoA + allodeoxycholate</text>
        <dbReference type="Rhea" id="RHEA:53768"/>
        <dbReference type="ChEBI" id="CHEBI:137661"/>
        <dbReference type="ChEBI" id="CHEBI:137662"/>
        <dbReference type="ChEBI" id="CHEBI:137663"/>
        <dbReference type="ChEBI" id="CHEBI:137664"/>
    </reaction>
    <physiologicalReaction direction="left-to-right" evidence="5">
        <dbReference type="Rhea" id="RHEA:53769"/>
    </physiologicalReaction>
</comment>
<comment type="catalytic activity">
    <reaction evidence="2">
        <text>ursodeoxycholate + deoxycholoyl-CoA = ursodeoxycholoyl-CoA + deoxycholate</text>
        <dbReference type="Rhea" id="RHEA:53796"/>
        <dbReference type="ChEBI" id="CHEBI:23614"/>
        <dbReference type="ChEBI" id="CHEBI:58810"/>
        <dbReference type="ChEBI" id="CHEBI:78604"/>
        <dbReference type="ChEBI" id="CHEBI:137679"/>
    </reaction>
    <physiologicalReaction direction="left-to-right" evidence="5">
        <dbReference type="Rhea" id="RHEA:53797"/>
    </physiologicalReaction>
</comment>
<comment type="catalytic activity">
    <reaction evidence="2">
        <text>allodeoxycholoyl-CoA + ursodeoxycholate = ursodeoxycholoyl-CoA + allodeoxycholate</text>
        <dbReference type="Rhea" id="RHEA:53804"/>
        <dbReference type="ChEBI" id="CHEBI:78604"/>
        <dbReference type="ChEBI" id="CHEBI:137662"/>
        <dbReference type="ChEBI" id="CHEBI:137664"/>
        <dbReference type="ChEBI" id="CHEBI:137679"/>
    </reaction>
    <physiologicalReaction direction="left-to-right" evidence="5">
        <dbReference type="Rhea" id="RHEA:53805"/>
    </physiologicalReaction>
</comment>
<comment type="pathway">
    <text evidence="5">Lipid metabolism; bile acid biosynthesis.</text>
</comment>
<comment type="similarity">
    <text evidence="4">Belongs to the CoA-transferase III family.</text>
</comment>
<dbReference type="EC" id="2.8.3.25" evidence="2"/>
<dbReference type="EMBL" id="EU675330">
    <property type="protein sequence ID" value="ACF20979.1"/>
    <property type="molecule type" value="Genomic_DNA"/>
</dbReference>
<dbReference type="SMR" id="B4YST4"/>
<dbReference type="SwissLipids" id="SLP:000001733"/>
<dbReference type="KEGG" id="ag:ACF20979"/>
<dbReference type="BioCyc" id="MetaCyc:MONOMER-18545"/>
<dbReference type="UniPathway" id="UPA00221"/>
<dbReference type="GO" id="GO:0033881">
    <property type="term" value="F:bile-acid-CoA transferase activity"/>
    <property type="evidence" value="ECO:0007669"/>
    <property type="project" value="UniProtKB-EC"/>
</dbReference>
<dbReference type="GO" id="GO:0006699">
    <property type="term" value="P:bile acid biosynthetic process"/>
    <property type="evidence" value="ECO:0007669"/>
    <property type="project" value="UniProtKB-UniPathway"/>
</dbReference>
<dbReference type="Gene3D" id="3.40.50.10540">
    <property type="entry name" value="Crotonobetainyl-coa:carnitine coa-transferase, domain 1"/>
    <property type="match status" value="1"/>
</dbReference>
<dbReference type="Gene3D" id="3.30.1540.10">
    <property type="entry name" value="formyl-coa transferase, domain 3"/>
    <property type="match status" value="1"/>
</dbReference>
<dbReference type="InterPro" id="IPR050509">
    <property type="entry name" value="CoA-transferase_III"/>
</dbReference>
<dbReference type="InterPro" id="IPR003673">
    <property type="entry name" value="CoA-Trfase_fam_III"/>
</dbReference>
<dbReference type="InterPro" id="IPR044855">
    <property type="entry name" value="CoA-Trfase_III_dom3_sf"/>
</dbReference>
<dbReference type="InterPro" id="IPR023606">
    <property type="entry name" value="CoA-Trfase_III_dom_1_sf"/>
</dbReference>
<dbReference type="PANTHER" id="PTHR48228:SF6">
    <property type="entry name" value="L-CARNITINE COA-TRANSFERASE"/>
    <property type="match status" value="1"/>
</dbReference>
<dbReference type="PANTHER" id="PTHR48228">
    <property type="entry name" value="SUCCINYL-COA--D-CITRAMALATE COA-TRANSFERASE"/>
    <property type="match status" value="1"/>
</dbReference>
<dbReference type="Pfam" id="PF02515">
    <property type="entry name" value="CoA_transf_3"/>
    <property type="match status" value="1"/>
</dbReference>
<dbReference type="SUPFAM" id="SSF89796">
    <property type="entry name" value="CoA-transferase family III (CaiB/BaiF)"/>
    <property type="match status" value="1"/>
</dbReference>